<comment type="function">
    <text evidence="1">Plays a role in pre-mRNA splicing as a core component of the spliceosomal U1, U2, U4 and U5 small nuclear ribonucleoproteins (snRNPs), the building blocks of the spliceosome (By similarity). Component of both the pre-catalytic spliceosome B complex and activated spliceosome C complexes (By similarity). As a component of the minor spliceosome, involved in the splicing of U12-type introns in pre-mRNAs (By similarity). As part of the U7 snRNP it is involved in histone pre-mRNA 3'-end processing (By similarity).</text>
</comment>
<comment type="subunit">
    <text evidence="1 2">Core component of the spliceosomal U1, U2, U4 and U5 small nuclear ribonucleoproteins (snRNPs), the building blocks of the spliceosome (By similarity). Most spliceosomal snRNPs contain a common set of Sm proteins, SNRPB, SNRPD1, SNRPD2, SNRPD3, SNRPE, SNRPF and SNRPG that assemble in a heptameric protein ring on the Sm site of the small nuclear RNA to form the core snRNP (By similarity). Component of the U1 snRNP (By similarity). The U1 snRNP is composed of the U1 snRNA and the 7 core Sm proteins SNRPB, SNRPD1, SNRPD2, SNRPD3, SNRPE, SNRPF and SNRPG, and at least three U1 snRNP-specific proteins SNRNP70/U1-70K, SNRPA/U1-A and SNRPC/U1-C (By similarity). Component of the U4/U6-U5 tri-snRNP complex composed of the U4, U6 and U5 snRNAs and at least PRPF3, PRPF4, PRPF6, PRPF8, PRPF31, SNRNP200, TXNL4A, SNRNP40, SNRPB, SNRPD1, SNRPD2, SNRPD3, SNRPE, SNRPF, SNRPG, DDX23, CD2BP2, PPIH, SNU13, EFTUD2, SART1 and USP39, plus LSM2, LSM3, LSM4, LSM5, LSM6, LSM7 and LSM8 (By similarity). Component of the U7 snRNP complex, or U7 Sm protein core complex, that is composed of the U7 snRNA and at least LSM10, LSM11, SNRPB, SNRPD3, SNRPE, SNRPF and SNRPG; the complex does not contain SNRPD1 and SNRPD2 (By similarity). Component of the minor spliceosome, which splices U12-type introns (By similarity). Part of the SMN-Sm complex that contains SMN1, GEMIN2/SIP1, DDX20/GEMIN3, GEMIN4, GEMIN5, GEMIN6, GEMIN7, GEMIN8, STRAP/UNRIP and the Sm proteins SNRPB, SNRPD1, SNRPD2, SNRPD3, SNRPE, SNRPF and SNRPG; catalyzes core snRNPs assembly (By similarity). Forms a 6S pICln-Sm complex composed of CLNS1A/pICln, SNRPD1, SNRPD2, SNRPE, SNRPF and SNRPG; ring-like structure where CLNS1A/pICln mimics additional Sm proteins and which is unable to assemble into the core snRNP (By similarity). Identified in a histone pre-mRNA complex, at least composed of ERI1, LSM11, SLBP, SNRPB, SYNCRIP and YBX1 (By similarity). Interacts with TDRD3 and SNUPN (By similarity). Interacts with PRMT5; interaction leads to its symmetric arginine dimethylation (By similarity). Interacts with TDRD6; interaction promotes association with PRMT5 (By similarity). Interacts with SMN1; the interaction is direct (By similarity).</text>
</comment>
<comment type="subcellular location">
    <subcellularLocation>
        <location evidence="1">Cytoplasm</location>
        <location evidence="1">Cytosol</location>
    </subcellularLocation>
    <subcellularLocation>
        <location evidence="1">Nucleus</location>
    </subcellularLocation>
    <text evidence="1">SMN-mediated assembly into core snRNPs occurs in the cytosol before SMN-mediated transport to the nucleus to be included in spliceosomes.</text>
</comment>
<comment type="PTM">
    <text evidence="1 2">Methylated by PRMT5 (By similarity). Arg-108 and Arg-112 are dimethylated, probably to asymmetric dimethylarginine (By similarity).</text>
</comment>
<comment type="similarity">
    <text evidence="6">Belongs to the snRNP SmB/SmN family.</text>
</comment>
<sequence length="240" mass="24592">MTVGKSSKMLQHIDYRMRCILQDGRIFIGTFKAFDKHMNLILCDCDEFRKIKPKNSKQAEREEKRVLGLVLLRGENLVSMTVEGPPPKDTGIARVPLAGAAGGPGIGRAAGRGIPAGVPMPQAPAGLAGPVRGVGGPSQQVMTPQGRGTVAAAAAAATASIAGAPTQYPPGRGGPPPPMGRGAPPPGMMGPPPGMRPPMGPPMGIPPGRGTPMGMPPPGMRPPPPGMRGPPPPGLRPPRP</sequence>
<protein>
    <recommendedName>
        <fullName>Small nuclear ribonucleoprotein-associated protein B'</fullName>
        <shortName>snRNP-B'</shortName>
        <shortName>snRPB'</shortName>
    </recommendedName>
    <alternativeName>
        <fullName>Sm protein B'</fullName>
        <shortName>Sm-B'</shortName>
        <shortName>SmB'</shortName>
    </alternativeName>
</protein>
<organism>
    <name type="scientific">Erinaceus europaeus</name>
    <name type="common">Western European hedgehog</name>
    <dbReference type="NCBI Taxonomy" id="9365"/>
    <lineage>
        <taxon>Eukaryota</taxon>
        <taxon>Metazoa</taxon>
        <taxon>Chordata</taxon>
        <taxon>Craniata</taxon>
        <taxon>Vertebrata</taxon>
        <taxon>Euteleostomi</taxon>
        <taxon>Mammalia</taxon>
        <taxon>Eutheria</taxon>
        <taxon>Laurasiatheria</taxon>
        <taxon>Eulipotyphla</taxon>
        <taxon>Erinaceidae</taxon>
        <taxon>Erinaceinae</taxon>
        <taxon>Erinaceus</taxon>
    </lineage>
</organism>
<proteinExistence type="evidence at transcript level"/>
<keyword id="KW-0963">Cytoplasm</keyword>
<keyword id="KW-0488">Methylation</keyword>
<keyword id="KW-0507">mRNA processing</keyword>
<keyword id="KW-0508">mRNA splicing</keyword>
<keyword id="KW-0539">Nucleus</keyword>
<keyword id="KW-1185">Reference proteome</keyword>
<keyword id="KW-0677">Repeat</keyword>
<keyword id="KW-0687">Ribonucleoprotein</keyword>
<keyword id="KW-0694">RNA-binding</keyword>
<keyword id="KW-0747">Spliceosome</keyword>
<reference key="1">
    <citation type="journal article" date="1999" name="Nucleic Acids Res.">
        <title>Concerted regulation and molecular evolution of the duplicated SNRPB'/B and SNRPN loci.</title>
        <authorList>
            <person name="Gray T.A."/>
            <person name="Smithwick M.J."/>
            <person name="Schaldach M.A."/>
            <person name="Martone D.L."/>
            <person name="Graves J.A."/>
            <person name="McCarrey J.R."/>
            <person name="Nicholls R.D."/>
        </authorList>
    </citation>
    <scope>NUCLEOTIDE SEQUENCE [GENOMIC DNA / MRNA]</scope>
</reference>
<feature type="chain" id="PRO_0000125516" description="Small nuclear ribonucleoprotein-associated protein B'">
    <location>
        <begin position="1"/>
        <end position="240"/>
    </location>
</feature>
<feature type="domain" description="Sm" evidence="4">
    <location>
        <begin position="4"/>
        <end position="86"/>
    </location>
</feature>
<feature type="repeat">
    <location>
        <begin position="175"/>
        <end position="181"/>
    </location>
</feature>
<feature type="repeat">
    <location>
        <begin position="191"/>
        <end position="196"/>
    </location>
</feature>
<feature type="repeat">
    <location>
        <begin position="216"/>
        <end position="221"/>
    </location>
</feature>
<feature type="repeat">
    <location>
        <begin position="222"/>
        <end position="228"/>
    </location>
</feature>
<feature type="repeat">
    <location>
        <begin position="230"/>
        <end position="236"/>
    </location>
</feature>
<feature type="region of interest" description="Disordered" evidence="5">
    <location>
        <begin position="163"/>
        <end position="240"/>
    </location>
</feature>
<feature type="region of interest" description="Repeat-rich region">
    <location>
        <begin position="175"/>
        <end position="236"/>
    </location>
</feature>
<feature type="compositionally biased region" description="Pro residues" evidence="5">
    <location>
        <begin position="172"/>
        <end position="205"/>
    </location>
</feature>
<feature type="compositionally biased region" description="Pro residues" evidence="5">
    <location>
        <begin position="214"/>
        <end position="240"/>
    </location>
</feature>
<feature type="modified residue" description="Asymmetric dimethylarginine; alternate" evidence="1">
    <location>
        <position position="108"/>
    </location>
</feature>
<feature type="modified residue" description="Dimethylated arginine; alternate" evidence="1">
    <location>
        <position position="108"/>
    </location>
</feature>
<feature type="modified residue" description="Omega-N-methylarginine; alternate" evidence="1">
    <location>
        <position position="108"/>
    </location>
</feature>
<feature type="modified residue" description="Asymmetric dimethylarginine; alternate" evidence="1">
    <location>
        <position position="112"/>
    </location>
</feature>
<feature type="modified residue" description="Dimethylated arginine; alternate" evidence="1">
    <location>
        <position position="112"/>
    </location>
</feature>
<feature type="modified residue" description="Omega-N-methylarginine; alternate" evidence="1">
    <location>
        <position position="112"/>
    </location>
</feature>
<feature type="modified residue" description="Omega-N-methylarginine" evidence="1">
    <location>
        <position position="147"/>
    </location>
</feature>
<feature type="modified residue" description="Omega-N-methylarginine" evidence="3">
    <location>
        <position position="172"/>
    </location>
</feature>
<name>RSMB_ERIEU</name>
<dbReference type="EMBL" id="AF134826">
    <property type="protein sequence ID" value="AAD54481.1"/>
    <property type="molecule type" value="mRNA"/>
</dbReference>
<dbReference type="EMBL" id="AF134829">
    <property type="protein sequence ID" value="AAD54484.1"/>
    <property type="molecule type" value="Genomic_DNA"/>
</dbReference>
<dbReference type="RefSeq" id="NP_001278812.1">
    <property type="nucleotide sequence ID" value="NM_001291883.1"/>
</dbReference>
<dbReference type="SMR" id="Q9TU67"/>
<dbReference type="STRING" id="9365.ENSEEUP00000014212"/>
<dbReference type="GeneID" id="103113472"/>
<dbReference type="CTD" id="6628"/>
<dbReference type="eggNOG" id="KOG3168">
    <property type="taxonomic scope" value="Eukaryota"/>
</dbReference>
<dbReference type="InParanoid" id="Q9TU67"/>
<dbReference type="OrthoDB" id="2020720at2759"/>
<dbReference type="Proteomes" id="UP000079721">
    <property type="component" value="Unplaced"/>
</dbReference>
<dbReference type="GO" id="GO:0005829">
    <property type="term" value="C:cytosol"/>
    <property type="evidence" value="ECO:0000250"/>
    <property type="project" value="UniProtKB"/>
</dbReference>
<dbReference type="GO" id="GO:0034709">
    <property type="term" value="C:methylosome"/>
    <property type="evidence" value="ECO:0000250"/>
    <property type="project" value="UniProtKB"/>
</dbReference>
<dbReference type="GO" id="GO:0016607">
    <property type="term" value="C:nuclear speck"/>
    <property type="evidence" value="ECO:0007669"/>
    <property type="project" value="TreeGrafter"/>
</dbReference>
<dbReference type="GO" id="GO:0005634">
    <property type="term" value="C:nucleus"/>
    <property type="evidence" value="ECO:0000250"/>
    <property type="project" value="UniProtKB"/>
</dbReference>
<dbReference type="GO" id="GO:0034719">
    <property type="term" value="C:SMN-Sm protein complex"/>
    <property type="evidence" value="ECO:0000250"/>
    <property type="project" value="UniProtKB"/>
</dbReference>
<dbReference type="GO" id="GO:0005685">
    <property type="term" value="C:U1 snRNP"/>
    <property type="evidence" value="ECO:0000250"/>
    <property type="project" value="UniProtKB"/>
</dbReference>
<dbReference type="GO" id="GO:0071007">
    <property type="term" value="C:U2-type catalytic step 2 spliceosome"/>
    <property type="evidence" value="ECO:0000250"/>
    <property type="project" value="UniProtKB"/>
</dbReference>
<dbReference type="GO" id="GO:0071005">
    <property type="term" value="C:U2-type precatalytic spliceosome"/>
    <property type="evidence" value="ECO:0000250"/>
    <property type="project" value="UniProtKB"/>
</dbReference>
<dbReference type="GO" id="GO:0005684">
    <property type="term" value="C:U2-type spliceosomal complex"/>
    <property type="evidence" value="ECO:0000250"/>
    <property type="project" value="UniProtKB"/>
</dbReference>
<dbReference type="GO" id="GO:0005687">
    <property type="term" value="C:U4 snRNP"/>
    <property type="evidence" value="ECO:0000250"/>
    <property type="project" value="UniProtKB"/>
</dbReference>
<dbReference type="GO" id="GO:0046540">
    <property type="term" value="C:U4/U6 x U5 tri-snRNP complex"/>
    <property type="evidence" value="ECO:0000250"/>
    <property type="project" value="UniProtKB"/>
</dbReference>
<dbReference type="GO" id="GO:0005683">
    <property type="term" value="C:U7 snRNP"/>
    <property type="evidence" value="ECO:0000250"/>
    <property type="project" value="UniProtKB"/>
</dbReference>
<dbReference type="GO" id="GO:0003723">
    <property type="term" value="F:RNA binding"/>
    <property type="evidence" value="ECO:0007669"/>
    <property type="project" value="UniProtKB-KW"/>
</dbReference>
<dbReference type="GO" id="GO:0000398">
    <property type="term" value="P:mRNA splicing, via spliceosome"/>
    <property type="evidence" value="ECO:0000250"/>
    <property type="project" value="UniProtKB"/>
</dbReference>
<dbReference type="GO" id="GO:0000387">
    <property type="term" value="P:spliceosomal snRNP assembly"/>
    <property type="evidence" value="ECO:0000250"/>
    <property type="project" value="UniProtKB"/>
</dbReference>
<dbReference type="CDD" id="cd01717">
    <property type="entry name" value="Sm_B"/>
    <property type="match status" value="1"/>
</dbReference>
<dbReference type="FunFam" id="2.30.30.100:FF:000004">
    <property type="entry name" value="Small nuclear ribonucleoprotein-associated proteins"/>
    <property type="match status" value="1"/>
</dbReference>
<dbReference type="Gene3D" id="2.30.30.100">
    <property type="match status" value="1"/>
</dbReference>
<dbReference type="InterPro" id="IPR010920">
    <property type="entry name" value="LSM_dom_sf"/>
</dbReference>
<dbReference type="InterPro" id="IPR047575">
    <property type="entry name" value="Sm"/>
</dbReference>
<dbReference type="InterPro" id="IPR001163">
    <property type="entry name" value="Sm_dom_euk/arc"/>
</dbReference>
<dbReference type="InterPro" id="IPR017131">
    <property type="entry name" value="snRNP-assoc_SmB/SmN"/>
</dbReference>
<dbReference type="PANTHER" id="PTHR14508">
    <property type="entry name" value="SNRPN UPSTREAM READING FRAME PROTEIN, SNURF"/>
    <property type="match status" value="1"/>
</dbReference>
<dbReference type="PANTHER" id="PTHR14508:SF2">
    <property type="entry name" value="SNRPN UPSTREAM READING FRAME PROTEIN-RELATED"/>
    <property type="match status" value="1"/>
</dbReference>
<dbReference type="Pfam" id="PF01423">
    <property type="entry name" value="LSM"/>
    <property type="match status" value="1"/>
</dbReference>
<dbReference type="PIRSF" id="PIRSF037187">
    <property type="entry name" value="snRNP_SmB/SmN"/>
    <property type="match status" value="1"/>
</dbReference>
<dbReference type="SMART" id="SM00651">
    <property type="entry name" value="Sm"/>
    <property type="match status" value="1"/>
</dbReference>
<dbReference type="SUPFAM" id="SSF50182">
    <property type="entry name" value="Sm-like ribonucleoproteins"/>
    <property type="match status" value="1"/>
</dbReference>
<dbReference type="PROSITE" id="PS52002">
    <property type="entry name" value="SM"/>
    <property type="match status" value="1"/>
</dbReference>
<gene>
    <name type="primary">SNRPB</name>
</gene>
<evidence type="ECO:0000250" key="1">
    <source>
        <dbReference type="UniProtKB" id="P14678"/>
    </source>
</evidence>
<evidence type="ECO:0000250" key="2">
    <source>
        <dbReference type="UniProtKB" id="P27048"/>
    </source>
</evidence>
<evidence type="ECO:0000250" key="3">
    <source>
        <dbReference type="UniProtKB" id="P63162"/>
    </source>
</evidence>
<evidence type="ECO:0000255" key="4">
    <source>
        <dbReference type="PROSITE-ProRule" id="PRU01346"/>
    </source>
</evidence>
<evidence type="ECO:0000256" key="5">
    <source>
        <dbReference type="SAM" id="MobiDB-lite"/>
    </source>
</evidence>
<evidence type="ECO:0000305" key="6"/>
<accession>Q9TU67</accession>
<accession>Q9TU64</accession>